<reference key="1">
    <citation type="journal article" date="2003" name="Proc. Natl. Acad. Sci. U.S.A.">
        <title>Complete genome sequence and analysis of Wolinella succinogenes.</title>
        <authorList>
            <person name="Baar C."/>
            <person name="Eppinger M."/>
            <person name="Raddatz G."/>
            <person name="Simon J."/>
            <person name="Lanz C."/>
            <person name="Klimmek O."/>
            <person name="Nandakumar R."/>
            <person name="Gross R."/>
            <person name="Rosinus A."/>
            <person name="Keller H."/>
            <person name="Jagtap P."/>
            <person name="Linke B."/>
            <person name="Meyer F."/>
            <person name="Lederer H."/>
            <person name="Schuster S.C."/>
        </authorList>
    </citation>
    <scope>NUCLEOTIDE SEQUENCE [LARGE SCALE GENOMIC DNA]</scope>
    <source>
        <strain>ATCC 29543 / DSM 1740 / CCUG 13145 / JCM 31913 / LMG 7466 / NCTC 11488 / FDC 602W</strain>
    </source>
</reference>
<accession>Q7M8D4</accession>
<proteinExistence type="inferred from homology"/>
<protein>
    <recommendedName>
        <fullName evidence="2">Large ribosomal subunit protein uL3</fullName>
    </recommendedName>
    <alternativeName>
        <fullName>50S ribosomal protein L3</fullName>
    </alternativeName>
</protein>
<keyword id="KW-1185">Reference proteome</keyword>
<keyword id="KW-0687">Ribonucleoprotein</keyword>
<keyword id="KW-0689">Ribosomal protein</keyword>
<keyword id="KW-0694">RNA-binding</keyword>
<keyword id="KW-0699">rRNA-binding</keyword>
<comment type="function">
    <text evidence="1">One of the primary rRNA binding proteins, it binds directly near the 3'-end of the 23S rRNA, where it nucleates assembly of the 50S subunit.</text>
</comment>
<comment type="subunit">
    <text evidence="1">Part of the 50S ribosomal subunit. Forms a cluster with proteins L14 and L19 (By similarity).</text>
</comment>
<comment type="similarity">
    <text evidence="2">Belongs to the universal ribosomal protein uL3 family.</text>
</comment>
<dbReference type="EMBL" id="BX571661">
    <property type="protein sequence ID" value="CAE10742.1"/>
    <property type="molecule type" value="Genomic_DNA"/>
</dbReference>
<dbReference type="RefSeq" id="WP_011139526.1">
    <property type="nucleotide sequence ID" value="NC_005090.1"/>
</dbReference>
<dbReference type="SMR" id="Q7M8D4"/>
<dbReference type="STRING" id="273121.WS1716"/>
<dbReference type="KEGG" id="wsu:WS1716"/>
<dbReference type="eggNOG" id="COG0087">
    <property type="taxonomic scope" value="Bacteria"/>
</dbReference>
<dbReference type="HOGENOM" id="CLU_044142_4_1_7"/>
<dbReference type="Proteomes" id="UP000000422">
    <property type="component" value="Chromosome"/>
</dbReference>
<dbReference type="GO" id="GO:0022625">
    <property type="term" value="C:cytosolic large ribosomal subunit"/>
    <property type="evidence" value="ECO:0007669"/>
    <property type="project" value="TreeGrafter"/>
</dbReference>
<dbReference type="GO" id="GO:0019843">
    <property type="term" value="F:rRNA binding"/>
    <property type="evidence" value="ECO:0007669"/>
    <property type="project" value="UniProtKB-KW"/>
</dbReference>
<dbReference type="GO" id="GO:0003735">
    <property type="term" value="F:structural constituent of ribosome"/>
    <property type="evidence" value="ECO:0007669"/>
    <property type="project" value="InterPro"/>
</dbReference>
<dbReference type="GO" id="GO:0006412">
    <property type="term" value="P:translation"/>
    <property type="evidence" value="ECO:0007669"/>
    <property type="project" value="InterPro"/>
</dbReference>
<dbReference type="FunFam" id="2.40.30.10:FF:000004">
    <property type="entry name" value="50S ribosomal protein L3"/>
    <property type="match status" value="1"/>
</dbReference>
<dbReference type="Gene3D" id="2.40.30.10">
    <property type="entry name" value="Translation factors"/>
    <property type="match status" value="1"/>
</dbReference>
<dbReference type="InterPro" id="IPR000597">
    <property type="entry name" value="Ribosomal_uL3"/>
</dbReference>
<dbReference type="InterPro" id="IPR019927">
    <property type="entry name" value="Ribosomal_uL3_bac/org-type"/>
</dbReference>
<dbReference type="InterPro" id="IPR009000">
    <property type="entry name" value="Transl_B-barrel_sf"/>
</dbReference>
<dbReference type="NCBIfam" id="TIGR03625">
    <property type="entry name" value="L3_bact"/>
    <property type="match status" value="1"/>
</dbReference>
<dbReference type="PANTHER" id="PTHR11229">
    <property type="entry name" value="50S RIBOSOMAL PROTEIN L3"/>
    <property type="match status" value="1"/>
</dbReference>
<dbReference type="PANTHER" id="PTHR11229:SF16">
    <property type="entry name" value="LARGE RIBOSOMAL SUBUNIT PROTEIN UL3C"/>
    <property type="match status" value="1"/>
</dbReference>
<dbReference type="Pfam" id="PF00297">
    <property type="entry name" value="Ribosomal_L3"/>
    <property type="match status" value="1"/>
</dbReference>
<dbReference type="SUPFAM" id="SSF50447">
    <property type="entry name" value="Translation proteins"/>
    <property type="match status" value="1"/>
</dbReference>
<evidence type="ECO:0000250" key="1"/>
<evidence type="ECO:0000305" key="2"/>
<organism>
    <name type="scientific">Wolinella succinogenes (strain ATCC 29543 / DSM 1740 / CCUG 13145 / JCM 31913 / LMG 7466 / NCTC 11488 / FDC 602W)</name>
    <name type="common">Vibrio succinogenes</name>
    <dbReference type="NCBI Taxonomy" id="273121"/>
    <lineage>
        <taxon>Bacteria</taxon>
        <taxon>Pseudomonadati</taxon>
        <taxon>Campylobacterota</taxon>
        <taxon>Epsilonproteobacteria</taxon>
        <taxon>Campylobacterales</taxon>
        <taxon>Helicobacteraceae</taxon>
        <taxon>Wolinella</taxon>
    </lineage>
</organism>
<sequence>MEFLVEKIGMSRTISVPSTPVTLLKVKDAKVCEVLGNGKALVAYAQGKDANKAIEGQQKKYNLSKEFNRFATLEVANGEAGDQDVAPLAQAVRVKVSLQTKGRGFTGVMKRWNFAGGPAAHGHRFKRRTGSIGNREWPGRVQPGKKMAGQYGNEKVTVQNEIVSFDAENKILVLKGSIPGFNGAFGRIKVVK</sequence>
<feature type="chain" id="PRO_0000077191" description="Large ribosomal subunit protein uL3">
    <location>
        <begin position="1"/>
        <end position="192"/>
    </location>
</feature>
<name>RL3_WOLSU</name>
<gene>
    <name type="primary">rplC</name>
    <name type="ordered locus">WS1716</name>
</gene>